<keyword id="KW-0414">Isoprene biosynthesis</keyword>
<keyword id="KW-0548">Nucleotidyltransferase</keyword>
<keyword id="KW-0808">Transferase</keyword>
<accession>B0RU03</accession>
<dbReference type="EC" id="2.7.7.60" evidence="1"/>
<dbReference type="EMBL" id="AM920689">
    <property type="protein sequence ID" value="CAP51917.1"/>
    <property type="molecule type" value="Genomic_DNA"/>
</dbReference>
<dbReference type="SMR" id="B0RU03"/>
<dbReference type="KEGG" id="xca:xcc-b100_2557"/>
<dbReference type="HOGENOM" id="CLU_061281_3_1_6"/>
<dbReference type="UniPathway" id="UPA00056">
    <property type="reaction ID" value="UER00093"/>
</dbReference>
<dbReference type="Proteomes" id="UP000001188">
    <property type="component" value="Chromosome"/>
</dbReference>
<dbReference type="GO" id="GO:0050518">
    <property type="term" value="F:2-C-methyl-D-erythritol 4-phosphate cytidylyltransferase activity"/>
    <property type="evidence" value="ECO:0007669"/>
    <property type="project" value="UniProtKB-UniRule"/>
</dbReference>
<dbReference type="GO" id="GO:0019288">
    <property type="term" value="P:isopentenyl diphosphate biosynthetic process, methylerythritol 4-phosphate pathway"/>
    <property type="evidence" value="ECO:0007669"/>
    <property type="project" value="UniProtKB-UniRule"/>
</dbReference>
<dbReference type="CDD" id="cd02516">
    <property type="entry name" value="CDP-ME_synthetase"/>
    <property type="match status" value="1"/>
</dbReference>
<dbReference type="FunFam" id="3.90.550.10:FF:000003">
    <property type="entry name" value="2-C-methyl-D-erythritol 4-phosphate cytidylyltransferase"/>
    <property type="match status" value="1"/>
</dbReference>
<dbReference type="Gene3D" id="3.90.550.10">
    <property type="entry name" value="Spore Coat Polysaccharide Biosynthesis Protein SpsA, Chain A"/>
    <property type="match status" value="1"/>
</dbReference>
<dbReference type="HAMAP" id="MF_00108">
    <property type="entry name" value="IspD"/>
    <property type="match status" value="1"/>
</dbReference>
<dbReference type="InterPro" id="IPR001228">
    <property type="entry name" value="IspD"/>
</dbReference>
<dbReference type="InterPro" id="IPR034683">
    <property type="entry name" value="IspD/TarI"/>
</dbReference>
<dbReference type="InterPro" id="IPR050088">
    <property type="entry name" value="IspD/TarI_cytidylyltransf_bact"/>
</dbReference>
<dbReference type="InterPro" id="IPR018294">
    <property type="entry name" value="ISPD_synthase_CS"/>
</dbReference>
<dbReference type="InterPro" id="IPR029044">
    <property type="entry name" value="Nucleotide-diphossugar_trans"/>
</dbReference>
<dbReference type="NCBIfam" id="TIGR00453">
    <property type="entry name" value="ispD"/>
    <property type="match status" value="1"/>
</dbReference>
<dbReference type="PANTHER" id="PTHR32125">
    <property type="entry name" value="2-C-METHYL-D-ERYTHRITOL 4-PHOSPHATE CYTIDYLYLTRANSFERASE, CHLOROPLASTIC"/>
    <property type="match status" value="1"/>
</dbReference>
<dbReference type="PANTHER" id="PTHR32125:SF4">
    <property type="entry name" value="2-C-METHYL-D-ERYTHRITOL 4-PHOSPHATE CYTIDYLYLTRANSFERASE, CHLOROPLASTIC"/>
    <property type="match status" value="1"/>
</dbReference>
<dbReference type="Pfam" id="PF01128">
    <property type="entry name" value="IspD"/>
    <property type="match status" value="1"/>
</dbReference>
<dbReference type="SUPFAM" id="SSF53448">
    <property type="entry name" value="Nucleotide-diphospho-sugar transferases"/>
    <property type="match status" value="1"/>
</dbReference>
<dbReference type="PROSITE" id="PS01295">
    <property type="entry name" value="ISPD"/>
    <property type="match status" value="1"/>
</dbReference>
<reference key="1">
    <citation type="journal article" date="2008" name="J. Biotechnol.">
        <title>The genome of Xanthomonas campestris pv. campestris B100 and its use for the reconstruction of metabolic pathways involved in xanthan biosynthesis.</title>
        <authorList>
            <person name="Vorhoelter F.-J."/>
            <person name="Schneiker S."/>
            <person name="Goesmann A."/>
            <person name="Krause L."/>
            <person name="Bekel T."/>
            <person name="Kaiser O."/>
            <person name="Linke B."/>
            <person name="Patschkowski T."/>
            <person name="Rueckert C."/>
            <person name="Schmid J."/>
            <person name="Sidhu V.K."/>
            <person name="Sieber V."/>
            <person name="Tauch A."/>
            <person name="Watt S.A."/>
            <person name="Weisshaar B."/>
            <person name="Becker A."/>
            <person name="Niehaus K."/>
            <person name="Puehler A."/>
        </authorList>
    </citation>
    <scope>NUCLEOTIDE SEQUENCE [LARGE SCALE GENOMIC DNA]</scope>
    <source>
        <strain>B100</strain>
    </source>
</reference>
<feature type="chain" id="PRO_1000094359" description="2-C-methyl-D-erythritol 4-phosphate cytidylyltransferase">
    <location>
        <begin position="1"/>
        <end position="265"/>
    </location>
</feature>
<feature type="region of interest" description="Disordered" evidence="2">
    <location>
        <begin position="231"/>
        <end position="265"/>
    </location>
</feature>
<feature type="compositionally biased region" description="Basic and acidic residues" evidence="2">
    <location>
        <begin position="231"/>
        <end position="241"/>
    </location>
</feature>
<feature type="compositionally biased region" description="Low complexity" evidence="2">
    <location>
        <begin position="253"/>
        <end position="265"/>
    </location>
</feature>
<feature type="site" description="Transition state stabilizer" evidence="1">
    <location>
        <position position="17"/>
    </location>
</feature>
<feature type="site" description="Transition state stabilizer" evidence="1">
    <location>
        <position position="24"/>
    </location>
</feature>
<feature type="site" description="Positions MEP for the nucleophilic attack" evidence="1">
    <location>
        <position position="157"/>
    </location>
</feature>
<feature type="site" description="Positions MEP for the nucleophilic attack" evidence="1">
    <location>
        <position position="213"/>
    </location>
</feature>
<sequence>MTGSVWAIVPAAGRGTRFGGAVPKQYLHAAGQPLMAYTLAALAAHPAVAGIVVAIAPDDADWPGWTAVHAKPLLTCVGGATRAASVLAGLLALPDGVRADDFVLVHDAARPNLALADLDRLLEIGRGDPVGAILAAPVRDTLKRAGDDGGIDGTEPRQRLWRALTPQLFRRHQLIRGLTEASAAGVDVTDEAMAIERLGLRPLLVEGAEDNFKVTTPADLARFEFELANRDRGGASREAERSAMPSAATSVFSGARSAASGSEEV</sequence>
<organism>
    <name type="scientific">Xanthomonas campestris pv. campestris (strain B100)</name>
    <dbReference type="NCBI Taxonomy" id="509169"/>
    <lineage>
        <taxon>Bacteria</taxon>
        <taxon>Pseudomonadati</taxon>
        <taxon>Pseudomonadota</taxon>
        <taxon>Gammaproteobacteria</taxon>
        <taxon>Lysobacterales</taxon>
        <taxon>Lysobacteraceae</taxon>
        <taxon>Xanthomonas</taxon>
    </lineage>
</organism>
<protein>
    <recommendedName>
        <fullName evidence="1">2-C-methyl-D-erythritol 4-phosphate cytidylyltransferase</fullName>
        <ecNumber evidence="1">2.7.7.60</ecNumber>
    </recommendedName>
    <alternativeName>
        <fullName evidence="1">4-diphosphocytidyl-2C-methyl-D-erythritol synthase</fullName>
    </alternativeName>
    <alternativeName>
        <fullName evidence="1">MEP cytidylyltransferase</fullName>
        <shortName evidence="1">MCT</shortName>
    </alternativeName>
</protein>
<name>ISPD_XANCB</name>
<proteinExistence type="inferred from homology"/>
<evidence type="ECO:0000255" key="1">
    <source>
        <dbReference type="HAMAP-Rule" id="MF_00108"/>
    </source>
</evidence>
<evidence type="ECO:0000256" key="2">
    <source>
        <dbReference type="SAM" id="MobiDB-lite"/>
    </source>
</evidence>
<comment type="function">
    <text evidence="1">Catalyzes the formation of 4-diphosphocytidyl-2-C-methyl-D-erythritol from CTP and 2-C-methyl-D-erythritol 4-phosphate (MEP).</text>
</comment>
<comment type="catalytic activity">
    <reaction evidence="1">
        <text>2-C-methyl-D-erythritol 4-phosphate + CTP + H(+) = 4-CDP-2-C-methyl-D-erythritol + diphosphate</text>
        <dbReference type="Rhea" id="RHEA:13429"/>
        <dbReference type="ChEBI" id="CHEBI:15378"/>
        <dbReference type="ChEBI" id="CHEBI:33019"/>
        <dbReference type="ChEBI" id="CHEBI:37563"/>
        <dbReference type="ChEBI" id="CHEBI:57823"/>
        <dbReference type="ChEBI" id="CHEBI:58262"/>
        <dbReference type="EC" id="2.7.7.60"/>
    </reaction>
</comment>
<comment type="pathway">
    <text evidence="1">Isoprenoid biosynthesis; isopentenyl diphosphate biosynthesis via DXP pathway; isopentenyl diphosphate from 1-deoxy-D-xylulose 5-phosphate: step 2/6.</text>
</comment>
<comment type="similarity">
    <text evidence="1">Belongs to the IspD/TarI cytidylyltransferase family. IspD subfamily.</text>
</comment>
<gene>
    <name evidence="1" type="primary">ispD</name>
    <name type="ordered locus">xcc-b100_2557</name>
</gene>